<proteinExistence type="evidence at protein level"/>
<reference key="1">
    <citation type="journal article" date="2019" name="Fungal Genet. Biol.">
        <title>Identification of the gene cluster for bistropolone-humulene meroterpenoid biosynthesis in Phoma sp.</title>
        <authorList>
            <person name="Zhai Y."/>
            <person name="Li Y."/>
            <person name="Zhang J."/>
            <person name="Zhang Y."/>
            <person name="Ren F."/>
            <person name="Zhang X."/>
            <person name="Liu G."/>
            <person name="Liu X."/>
            <person name="Che Y."/>
        </authorList>
    </citation>
    <scope>NUCLEOTIDE SEQUENCE [GENOMIC DNA]</scope>
    <scope>FUNCTION</scope>
    <scope>DISRUPTION PHENOTYPE</scope>
    <scope>PATHWAY</scope>
    <source>
        <strain>XZ068 / CGMCC No. 10481</strain>
    </source>
</reference>
<reference key="2">
    <citation type="journal article" date="1993" name="J. Antibiot.">
        <title>Eupenifeldin, a novel cytotoxic bistropolone from Eupenicillium brefeldianum.</title>
        <authorList>
            <person name="Mayerl F."/>
            <person name="Gao Q."/>
            <person name="Huang S."/>
            <person name="Klohr S.E."/>
            <person name="Matson J.A."/>
            <person name="Gustavson D.R."/>
            <person name="Pirnik D.M."/>
            <person name="Berry R.L."/>
            <person name="Fairchild C."/>
            <person name="Rose W.C."/>
        </authorList>
    </citation>
    <scope>BIOTECHNOLOGY</scope>
</reference>
<reference key="3">
    <citation type="journal article" date="2008" name="J. Nat. Prod.">
        <title>Noreupenifeldin, a tropolone from an unidentified ascomycete.</title>
        <authorList>
            <person name="Ayers S."/>
            <person name="Zink D.L."/>
            <person name="Powell J.S."/>
            <person name="Brown C.M."/>
            <person name="Grund A."/>
            <person name="Bills G.F."/>
            <person name="Platas G."/>
            <person name="Thompson D."/>
            <person name="Singh S.B."/>
        </authorList>
    </citation>
    <scope>BIOTECHNOLOGY</scope>
</reference>
<reference key="4">
    <citation type="journal article" date="2008" name="Phytochem. Lett.">
        <title>Ramiferin, a bisphenol-sesquiterpene from the fungus Kionochaeta ramifera BCC 7585.</title>
        <authorList>
            <person name="Bunyapaiboonsri T."/>
            <person name="Veeranondha S."/>
            <person name="Boonruangprapa T."/>
            <person name="Somrithipol S."/>
        </authorList>
    </citation>
    <scope>BIOTECHNOLOGY</scope>
</reference>
<name>EUPA_PHOSX</name>
<evidence type="ECO:0000250" key="1">
    <source>
        <dbReference type="UniProtKB" id="A0A0K0MCJ4"/>
    </source>
</evidence>
<evidence type="ECO:0000250" key="2">
    <source>
        <dbReference type="UniProtKB" id="A5PHD6"/>
    </source>
</evidence>
<evidence type="ECO:0000255" key="3"/>
<evidence type="ECO:0000255" key="4">
    <source>
        <dbReference type="PROSITE-ProRule" id="PRU00258"/>
    </source>
</evidence>
<evidence type="ECO:0000255" key="5">
    <source>
        <dbReference type="PROSITE-ProRule" id="PRU01348"/>
    </source>
</evidence>
<evidence type="ECO:0000255" key="6">
    <source>
        <dbReference type="PROSITE-ProRule" id="PRU01363"/>
    </source>
</evidence>
<evidence type="ECO:0000269" key="7">
    <source>
    </source>
</evidence>
<evidence type="ECO:0000269" key="8">
    <source>
    </source>
</evidence>
<evidence type="ECO:0000269" key="9">
    <source>
    </source>
</evidence>
<evidence type="ECO:0000269" key="10">
    <source ref="4"/>
</evidence>
<evidence type="ECO:0000303" key="11">
    <source>
    </source>
</evidence>
<evidence type="ECO:0000305" key="12">
    <source>
    </source>
</evidence>
<comment type="function">
    <text evidence="8 12">Non-reducing polyketide synthase; part of the gene cluster that mediates the biosynthesis of eupenifeldin, a bistropolone meroterpenoid that acts as an antitumor agent (PubMed:30980906). The first step of eupenifeldin biosynthesis is the biosynthesis of 3-methylorcinaldehyde performed by the non-reducing polyketide synthase eupA (PubMed:30980906). Oxidative dearomatization of 3-methylorcinaldehyde likely catalyzed by the FAD-dependent monooxygenase eupB is followed by oxidative ring expansion by the 2-oxoglutarate-dependent dioxygenase eupC to provide the first tropolone metabolite, tropolone stipitaldehyde (Probable). In parallel, generation of sesquiterpene alpha-humulene from farnesylpyrophosphate (FPP) is catalyzed by the terpene cyclase eupE (PubMed:30980906). The cytochrome P450 monooxygenase eupD then hydroxylates humulene to humulenol (PubMed:30980906). The putative Diels-Alderase eupF probably catalyzes the formation of the tropolone-humulene skeleton by linking humulenol and the polyketide moiety (Probable). The short-chain dehydrogenase/reductase eupG and the flavin-dependent monooxygenase eupH are also essential for eupenifeldin biosynthesis and are likely the additional decorating enzymes of the tropolone-humulene skeleton to produce final eupenifeldin or derivatives (Probable).</text>
</comment>
<comment type="pathway">
    <text evidence="8">Secondary metabolite biosynthesis; terpenoid biosynthesis.</text>
</comment>
<comment type="domain">
    <text evidence="2 3">Multidomain protein; including a starter unit:ACP transacylase (SAT) that selects the starter unit; a ketosynthase (KS) that catalyzes repeated decarboxylative condensation to elongate the polyketide backbone; a malonyl-CoA:ACP transacylase (MAT) that selects and transfers the extender unit malonyl-CoA; a product template (PT) domain that controls the immediate cyclization regioselectivity of the reactive polyketide backbone; an acyl-carrier protein (ACP) that serves as the tether of the growing and completed polyketide via its phosphopantetheinyl arm; a C-methylation (C-Met) domain; and a C-terminal reductase (R) domain (By similarity). Methylation occurs during the processive construction of the carbon backbone, directly after the second extension at the triketide stage (By similarity). The C-terminal R domain is involved in a reductive release mechanism, reducing the thiolester intermediate to the observed aldehyde and concomitantly releasing the free holo-ACP thiol (By similarity).</text>
</comment>
<comment type="disruption phenotype">
    <text evidence="8">Abolishes the production of eupenifeldin.</text>
</comment>
<comment type="biotechnology">
    <text evidence="7 9 10">Eupenifeldin is a bistropolone-humulene meroterpenoid first discovered as an antitumor and anti-leukemia agent (PubMed:8360103). This metabolite also shows anthelmintic activity against the parasitic worm Hemonchus contortus, anti-malarial activity as well as antifungal activity (PubMed:18095654, Ref.4).</text>
</comment>
<feature type="chain" id="PRO_0000449149" description="3-methylorcinaldehyde synthase">
    <location>
        <begin position="1"/>
        <end position="2682"/>
    </location>
</feature>
<feature type="domain" description="Ketosynthase family 3 (KS3)" evidence="5">
    <location>
        <begin position="401"/>
        <end position="826"/>
    </location>
</feature>
<feature type="domain" description="PKS/mFAS DH" evidence="6">
    <location>
        <begin position="1339"/>
        <end position="1651"/>
    </location>
</feature>
<feature type="domain" description="Carrier" evidence="4">
    <location>
        <begin position="1723"/>
        <end position="1797"/>
    </location>
</feature>
<feature type="region of interest" description="N-terminal acylcarrier protein transacylase domain (SAT)" evidence="3">
    <location>
        <begin position="111"/>
        <end position="272"/>
    </location>
</feature>
<feature type="region of interest" description="Malonyl-CoA:ACP transacylase (MAT) domain" evidence="3">
    <location>
        <begin position="947"/>
        <end position="1237"/>
    </location>
</feature>
<feature type="region of interest" description="N-terminal hotdog fold" evidence="6">
    <location>
        <begin position="1339"/>
        <end position="1468"/>
    </location>
</feature>
<feature type="region of interest" description="Product template (PT) domain" evidence="3">
    <location>
        <begin position="1367"/>
        <end position="1649"/>
    </location>
</feature>
<feature type="region of interest" description="C-terminal hotdog fold" evidence="6">
    <location>
        <begin position="1496"/>
        <end position="1651"/>
    </location>
</feature>
<feature type="region of interest" description="Methyltransferase domain" evidence="3">
    <location>
        <begin position="2021"/>
        <end position="2211"/>
    </location>
</feature>
<feature type="region of interest" description="NADPH-binding (R) domain" evidence="3">
    <location>
        <begin position="2303"/>
        <end position="2548"/>
    </location>
</feature>
<feature type="active site" description="Nucleophile; for transacylase activity" evidence="1">
    <location>
        <position position="154"/>
    </location>
</feature>
<feature type="active site" description="Proton donor/acceptor; for transacylase activity" evidence="1">
    <location>
        <position position="272"/>
    </location>
</feature>
<feature type="active site" description="For beta-ketoacyl synthase activity" evidence="5">
    <location>
        <position position="573"/>
    </location>
</feature>
<feature type="active site" description="For beta-ketoacyl synthase activity" evidence="5">
    <location>
        <position position="708"/>
    </location>
</feature>
<feature type="active site" description="For beta-ketoacyl synthase activity" evidence="5">
    <location>
        <position position="749"/>
    </location>
</feature>
<feature type="active site" description="Proton acceptor; for dehydratase activity" evidence="6">
    <location>
        <position position="1371"/>
    </location>
</feature>
<feature type="active site" description="Proton donor; for dehydratase activity" evidence="6">
    <location>
        <position position="1555"/>
    </location>
</feature>
<feature type="modified residue" description="O-(pantetheine 4'-phosphoryl)serine" evidence="4">
    <location>
        <position position="1757"/>
    </location>
</feature>
<protein>
    <recommendedName>
        <fullName evidence="11">3-methylorcinaldehyde synthase</fullName>
        <shortName evidence="11">MOS</shortName>
        <ecNumber evidence="12">2.3.1.-</ecNumber>
    </recommendedName>
    <alternativeName>
        <fullName evidence="11">Eupenifeldin biosynthesis cluster protein A</fullName>
    </alternativeName>
    <alternativeName>
        <fullName evidence="11">Non-reducing polyketide synthase eupA</fullName>
        <shortName evidence="11">NR-PKS eupA</shortName>
    </alternativeName>
</protein>
<gene>
    <name evidence="11" type="primary">eupA</name>
    <name type="ORF">gme12632</name>
</gene>
<sequence>MQTEEWKMANQDNNKPQRDSERCVFLFGSLSLSFDASAFAQVRKAIANDERNSWLVNAARQLPQDLETILSGLPSLNNSNTRARKQLADLHNAIIGGRPLDTPFPLPNTVLIPLVVIEQLSQYADFARQKGVERSGTPDGWPAIEADTKSLGLCTGNLAAFATSSARSWGDFQKYGAAAVRLGLLVGLVIDSQDEAFDSRRWRSLSVAWSGSQGGEELQRILPEFDETYVSVYYDACRSTITTPVSSLPTLVHRLKAAGLGVTEITLYGAFHSAARNSAVLEQLTVFCDSHADFQLSTSAASVAALQANDNTDHKDIIRKQGALHAKALRRILVEPAQWFDALAAVLGEEGERARVVSFGSERSVPLSLAMRSNVRVVHATDTHDGNRGTNADGGERMWAESDIAVIGMACKVAGAEGVEEFWELLVEGHSQHRDISASERFSFDDTAFRTASDSNMQRKWYANLVDGHDQFDHRFFKKSARESAAMDPQQRQLLQVAYQAAEQAGCFTRTNSVCDGNVGCFVGVCLSDYESNVGCHPANAFTATGNLQGFIAGKVSHFLGWTGPALTIDTACSSSLVAVHQACASILAGECNSALAGGTHIMTTAGWFQNLAAGAFVSPTGQCKPFDAAADGYCRGEGVGAVVLKKLSQAIADGDRVLGVIGATAVQQNQNCTPIFVPNVPSLSALFTTVTAKAHVKPASVSVVEAHGTGTAVGDPAEWASIRQTLGGLNRPPERPLMVSSTKGLVGHLECTSGIISLIKVLLMVQKRMLPPQASFDTLNPVLNAQPSDHMFVPRRAQPWDAEFRVALINNYGASGSNASMIVMQPPTFDTVAPIHLAAAVRSPDCRYPFWLSGLDSSSLRRRAKALRRFLSRGLGPASSLAPSLASISYNLAHQGDRALDQRITFTAASVTELDQHLAACEDGSDNKPAAPASTAASKQTVVMCFGGQVSTHIGLDPHVYNSVGLLRQHLDNVDTIIQSLGYTTIFPAIFQRVPLADTVHLQTMLFAMQFACAQAWIDSGLRPTVLVGHSFGELTALCVSGALSLVDAVKMIARRAAIVRDAWGIDRGTMMAVEGDLYEVEQLLVDVNSSISPAVPISIACYNGPRSFTLAGSTDTINEVDARLCAQPGRSIKSRRLNVTNAFHSALVDPLLHRLEESCEDLTFRRPVLYLERALDSTSSGPEWSARSVAEHMRNPVYFHHALQRIVQIDPSSSFVFVEAGTNSSITAMTSRALDNKIIKGTSTFHGLSIANCDDGWNKLTDSIMSLWKAGLNVQHWAHHQRQRRYQADIEPLLLPPYQFDPNARHWMDLKPLPRQLPALIEEATKTEADKKPEGLLTFVGFQDSSTQMQAQFQINTNTEEYKSLLLGHMTIQTAPICPATMQISFVIEAIVTIRHELQTEQEPQIQDVQYRSPVCANLSRKTWIEIKDENERGLAWRFEVFSTESHSGPRTIHTTGKIKFTNARDATLQRQLMQFERLFGHHRATDLLKSAEVDEVLANRSIYLIFSEIVDYGEEYRGLQKFASKGHESAGHVVRRHSHDRKTPRFDAHLADTFCQLGGIWINCMTERSQDDIYLANSIDQWIRSPHNAGAAGSTVEPSKEYHVYATHHRPSDKLSLTDVFVFDVKAGKLVEVILGIAYVKIPKLSMQKMLTRLTGSEWLNNTPATSMNQAPVSAPNPATRPSIVDLPSAVTQVPVLLPQGVKPSAEIRPSEPPSRSLLENITERVKAVVADLSGVEVTEIGDECDLADLGIDSLAGMQMVHEIEGALHVTLPEKEILLVVTMRDLMKVVTGVVEVDFEATDSLSSDNDLPSIATSSEGERVATNLTTPAPQSDVDKDEHEAFESNDLRLPAAVVLEAFKETRELTDEHVLGVGQASYVSEALPLQTELSISLTLEAFEALGAGLRNAGPGEQLFRIVHDEEHARFVDYMYDMLEIETQIIKVDRGIITRTAVPFPERSSTVVYAELRRRFPDQRAADELTYYAGTHLMQVLSGETTGVKLIFGTTEGRELVSTFYGEWPLNQVMYTQMEDFFTRLASKLPATNDNKPLRILEMGAGTGGTTKRLVPLLARLQIPVEYTFTDLAPSFVRAARNKWEKLYPWMRFRVHDIEKAPGEDLVNTQHFVLASNAIHATRSIRESTLNVRKFLRSDGYLLMGEMTRTPYWVDIIFGLFEGWWLFDDGRRHALTHESRWETDLQSAGYGHVYWTEGTRPESEIEKLILAAASLTNLAGSDFVQSERNPITKRHQFDNEVSGGCAEREKLIMEYVCDSTQDFAKTFKVPMSSIPRSLHHKSKGKWIVVTGATGGLGAHLVAKAAVRSDVERVVCLNRRSKQNALERQMHALRKQGISLDSECLAKLDVHVTELAQPSSLGLPNELYNLLLDNVTHIVHNAWLMNSKWTVKRFEPQIRIMKHMIHFARDISLRHTESDPVTFIFVSSIATVGFHPLLAKSPIVPEDRVSIDSVLPTGYGEAKYICERMLDTSLHRYPSRFRAAAVRLGQIAGSSLNGYWNPMEHVSFLIKSSQTLRALPNLPGSLGWTPADAIADSLLDICTQPGDVALHPLYHIDNPVRQNWDEMLAVLADVLNISQGASGIVPFDEWLRRVRDWPHTEDNASDGKNPAYVLVDFLEDHFVRMSCGGLLLGTRKAREHSETLACVGPVDAQAIKLYVRSWKDMGFLD</sequence>
<keyword id="KW-0012">Acyltransferase</keyword>
<keyword id="KW-0489">Methyltransferase</keyword>
<keyword id="KW-0511">Multifunctional enzyme</keyword>
<keyword id="KW-0521">NADP</keyword>
<keyword id="KW-0596">Phosphopantetheine</keyword>
<keyword id="KW-0597">Phosphoprotein</keyword>
<keyword id="KW-0808">Transferase</keyword>
<dbReference type="EC" id="2.3.1.-" evidence="12"/>
<dbReference type="EMBL" id="MK400120">
    <property type="protein sequence ID" value="QCO93110.1"/>
    <property type="molecule type" value="Genomic_DNA"/>
</dbReference>
<dbReference type="SMR" id="A0A4P8GHJ1"/>
<dbReference type="UniPathway" id="UPA00213"/>
<dbReference type="GO" id="GO:0004315">
    <property type="term" value="F:3-oxoacyl-[acyl-carrier-protein] synthase activity"/>
    <property type="evidence" value="ECO:0007669"/>
    <property type="project" value="InterPro"/>
</dbReference>
<dbReference type="GO" id="GO:0008168">
    <property type="term" value="F:methyltransferase activity"/>
    <property type="evidence" value="ECO:0007669"/>
    <property type="project" value="UniProtKB-KW"/>
</dbReference>
<dbReference type="GO" id="GO:0031177">
    <property type="term" value="F:phosphopantetheine binding"/>
    <property type="evidence" value="ECO:0007669"/>
    <property type="project" value="InterPro"/>
</dbReference>
<dbReference type="GO" id="GO:0006633">
    <property type="term" value="P:fatty acid biosynthetic process"/>
    <property type="evidence" value="ECO:0007669"/>
    <property type="project" value="InterPro"/>
</dbReference>
<dbReference type="GO" id="GO:0032259">
    <property type="term" value="P:methylation"/>
    <property type="evidence" value="ECO:0007669"/>
    <property type="project" value="UniProtKB-KW"/>
</dbReference>
<dbReference type="GO" id="GO:0016114">
    <property type="term" value="P:terpenoid biosynthetic process"/>
    <property type="evidence" value="ECO:0007669"/>
    <property type="project" value="UniProtKB-UniPathway"/>
</dbReference>
<dbReference type="CDD" id="cd02440">
    <property type="entry name" value="AdoMet_MTases"/>
    <property type="match status" value="1"/>
</dbReference>
<dbReference type="CDD" id="cd00833">
    <property type="entry name" value="PKS"/>
    <property type="match status" value="1"/>
</dbReference>
<dbReference type="Gene3D" id="3.30.70.3290">
    <property type="match status" value="1"/>
</dbReference>
<dbReference type="Gene3D" id="3.40.47.10">
    <property type="match status" value="1"/>
</dbReference>
<dbReference type="Gene3D" id="1.10.1200.10">
    <property type="entry name" value="ACP-like"/>
    <property type="match status" value="1"/>
</dbReference>
<dbReference type="Gene3D" id="3.40.366.10">
    <property type="entry name" value="Malonyl-Coenzyme A Acyl Carrier Protein, domain 2"/>
    <property type="match status" value="2"/>
</dbReference>
<dbReference type="Gene3D" id="3.40.50.720">
    <property type="entry name" value="NAD(P)-binding Rossmann-like Domain"/>
    <property type="match status" value="1"/>
</dbReference>
<dbReference type="Gene3D" id="3.10.129.110">
    <property type="entry name" value="Polyketide synthase dehydratase"/>
    <property type="match status" value="1"/>
</dbReference>
<dbReference type="Gene3D" id="3.40.50.150">
    <property type="entry name" value="Vaccinia Virus protein VP39"/>
    <property type="match status" value="1"/>
</dbReference>
<dbReference type="InterPro" id="IPR001227">
    <property type="entry name" value="Ac_transferase_dom_sf"/>
</dbReference>
<dbReference type="InterPro" id="IPR036736">
    <property type="entry name" value="ACP-like_sf"/>
</dbReference>
<dbReference type="InterPro" id="IPR014043">
    <property type="entry name" value="Acyl_transferase_dom"/>
</dbReference>
<dbReference type="InterPro" id="IPR016035">
    <property type="entry name" value="Acyl_Trfase/lysoPLipase"/>
</dbReference>
<dbReference type="InterPro" id="IPR013120">
    <property type="entry name" value="Far_NAD-bd"/>
</dbReference>
<dbReference type="InterPro" id="IPR018201">
    <property type="entry name" value="Ketoacyl_synth_AS"/>
</dbReference>
<dbReference type="InterPro" id="IPR014031">
    <property type="entry name" value="Ketoacyl_synth_C"/>
</dbReference>
<dbReference type="InterPro" id="IPR014030">
    <property type="entry name" value="Ketoacyl_synth_N"/>
</dbReference>
<dbReference type="InterPro" id="IPR016036">
    <property type="entry name" value="Malonyl_transacylase_ACP-bd"/>
</dbReference>
<dbReference type="InterPro" id="IPR013217">
    <property type="entry name" value="Methyltransf_12"/>
</dbReference>
<dbReference type="InterPro" id="IPR036291">
    <property type="entry name" value="NAD(P)-bd_dom_sf"/>
</dbReference>
<dbReference type="InterPro" id="IPR020841">
    <property type="entry name" value="PKS_Beta-ketoAc_synthase_dom"/>
</dbReference>
<dbReference type="InterPro" id="IPR042104">
    <property type="entry name" value="PKS_dehydratase_sf"/>
</dbReference>
<dbReference type="InterPro" id="IPR049900">
    <property type="entry name" value="PKS_mFAS_DH"/>
</dbReference>
<dbReference type="InterPro" id="IPR020806">
    <property type="entry name" value="PKS_PP-bd"/>
</dbReference>
<dbReference type="InterPro" id="IPR050444">
    <property type="entry name" value="Polyketide_Synthase"/>
</dbReference>
<dbReference type="InterPro" id="IPR009081">
    <property type="entry name" value="PP-bd_ACP"/>
</dbReference>
<dbReference type="InterPro" id="IPR006162">
    <property type="entry name" value="Ppantetheine_attach_site"/>
</dbReference>
<dbReference type="InterPro" id="IPR029063">
    <property type="entry name" value="SAM-dependent_MTases_sf"/>
</dbReference>
<dbReference type="InterPro" id="IPR032088">
    <property type="entry name" value="SAT"/>
</dbReference>
<dbReference type="InterPro" id="IPR016039">
    <property type="entry name" value="Thiolase-like"/>
</dbReference>
<dbReference type="PANTHER" id="PTHR45681:SF6">
    <property type="entry name" value="POLYKETIDE SYNTHASE 37"/>
    <property type="match status" value="1"/>
</dbReference>
<dbReference type="PANTHER" id="PTHR45681">
    <property type="entry name" value="POLYKETIDE SYNTHASE 44-RELATED"/>
    <property type="match status" value="1"/>
</dbReference>
<dbReference type="Pfam" id="PF00698">
    <property type="entry name" value="Acyl_transf_1"/>
    <property type="match status" value="1"/>
</dbReference>
<dbReference type="Pfam" id="PF18558">
    <property type="entry name" value="HTH_51"/>
    <property type="match status" value="1"/>
</dbReference>
<dbReference type="Pfam" id="PF00109">
    <property type="entry name" value="ketoacyl-synt"/>
    <property type="match status" value="1"/>
</dbReference>
<dbReference type="Pfam" id="PF02801">
    <property type="entry name" value="Ketoacyl-synt_C"/>
    <property type="match status" value="1"/>
</dbReference>
<dbReference type="Pfam" id="PF08242">
    <property type="entry name" value="Methyltransf_12"/>
    <property type="match status" value="1"/>
</dbReference>
<dbReference type="Pfam" id="PF07993">
    <property type="entry name" value="NAD_binding_4"/>
    <property type="match status" value="1"/>
</dbReference>
<dbReference type="Pfam" id="PF00550">
    <property type="entry name" value="PP-binding"/>
    <property type="match status" value="1"/>
</dbReference>
<dbReference type="Pfam" id="PF16073">
    <property type="entry name" value="SAT"/>
    <property type="match status" value="1"/>
</dbReference>
<dbReference type="SMART" id="SM00827">
    <property type="entry name" value="PKS_AT"/>
    <property type="match status" value="1"/>
</dbReference>
<dbReference type="SMART" id="SM00825">
    <property type="entry name" value="PKS_KS"/>
    <property type="match status" value="1"/>
</dbReference>
<dbReference type="SMART" id="SM00823">
    <property type="entry name" value="PKS_PP"/>
    <property type="match status" value="1"/>
</dbReference>
<dbReference type="SUPFAM" id="SSF47336">
    <property type="entry name" value="ACP-like"/>
    <property type="match status" value="1"/>
</dbReference>
<dbReference type="SUPFAM" id="SSF52151">
    <property type="entry name" value="FabD/lysophospholipase-like"/>
    <property type="match status" value="1"/>
</dbReference>
<dbReference type="SUPFAM" id="SSF51735">
    <property type="entry name" value="NAD(P)-binding Rossmann-fold domains"/>
    <property type="match status" value="1"/>
</dbReference>
<dbReference type="SUPFAM" id="SSF55048">
    <property type="entry name" value="Probable ACP-binding domain of malonyl-CoA ACP transacylase"/>
    <property type="match status" value="1"/>
</dbReference>
<dbReference type="SUPFAM" id="SSF53335">
    <property type="entry name" value="S-adenosyl-L-methionine-dependent methyltransferases"/>
    <property type="match status" value="1"/>
</dbReference>
<dbReference type="SUPFAM" id="SSF53901">
    <property type="entry name" value="Thiolase-like"/>
    <property type="match status" value="1"/>
</dbReference>
<dbReference type="PROSITE" id="PS50075">
    <property type="entry name" value="CARRIER"/>
    <property type="match status" value="1"/>
</dbReference>
<dbReference type="PROSITE" id="PS00606">
    <property type="entry name" value="KS3_1"/>
    <property type="match status" value="1"/>
</dbReference>
<dbReference type="PROSITE" id="PS52004">
    <property type="entry name" value="KS3_2"/>
    <property type="match status" value="1"/>
</dbReference>
<dbReference type="PROSITE" id="PS00012">
    <property type="entry name" value="PHOSPHOPANTETHEINE"/>
    <property type="match status" value="1"/>
</dbReference>
<dbReference type="PROSITE" id="PS52019">
    <property type="entry name" value="PKS_MFAS_DH"/>
    <property type="match status" value="1"/>
</dbReference>
<accession>A0A4P8GHJ1</accession>
<organism>
    <name type="scientific">Phoma sp</name>
    <dbReference type="NCBI Taxonomy" id="1707701"/>
    <lineage>
        <taxon>Eukaryota</taxon>
        <taxon>Fungi</taxon>
        <taxon>Dikarya</taxon>
        <taxon>Ascomycota</taxon>
        <taxon>Pezizomycotina</taxon>
        <taxon>Dothideomycetes</taxon>
        <taxon>Pleosporomycetidae</taxon>
        <taxon>Pleosporales</taxon>
        <taxon>Pleosporineae</taxon>
        <taxon>Didymellaceae</taxon>
        <taxon>Phoma</taxon>
    </lineage>
</organism>